<name>GPMA2_GLOVI</name>
<evidence type="ECO:0000255" key="1">
    <source>
        <dbReference type="HAMAP-Rule" id="MF_01039"/>
    </source>
</evidence>
<feature type="chain" id="PRO_0000179880" description="2,3-bisphosphoglycerate-dependent phosphoglycerate mutase 2">
    <location>
        <begin position="1"/>
        <end position="219"/>
    </location>
</feature>
<feature type="active site" description="Tele-phosphohistidine intermediate" evidence="1">
    <location>
        <position position="9"/>
    </location>
</feature>
<feature type="active site" description="Proton donor/acceptor" evidence="1">
    <location>
        <position position="85"/>
    </location>
</feature>
<feature type="binding site" evidence="1">
    <location>
        <begin position="8"/>
        <end position="15"/>
    </location>
    <ligand>
        <name>substrate</name>
    </ligand>
</feature>
<feature type="binding site" evidence="1">
    <location>
        <begin position="21"/>
        <end position="22"/>
    </location>
    <ligand>
        <name>substrate</name>
    </ligand>
</feature>
<feature type="binding site" evidence="1">
    <location>
        <position position="58"/>
    </location>
    <ligand>
        <name>substrate</name>
    </ligand>
</feature>
<feature type="binding site" evidence="1">
    <location>
        <begin position="85"/>
        <end position="88"/>
    </location>
    <ligand>
        <name>substrate</name>
    </ligand>
</feature>
<feature type="binding site" evidence="1">
    <location>
        <position position="96"/>
    </location>
    <ligand>
        <name>substrate</name>
    </ligand>
</feature>
<feature type="binding site" evidence="1">
    <location>
        <begin position="112"/>
        <end position="113"/>
    </location>
    <ligand>
        <name>substrate</name>
    </ligand>
</feature>
<feature type="binding site" evidence="1">
    <location>
        <begin position="156"/>
        <end position="157"/>
    </location>
    <ligand>
        <name>substrate</name>
    </ligand>
</feature>
<feature type="site" description="Transition state stabilizer" evidence="1">
    <location>
        <position position="155"/>
    </location>
</feature>
<comment type="function">
    <text evidence="1">Catalyzes the interconversion of 2-phosphoglycerate and 3-phosphoglycerate.</text>
</comment>
<comment type="catalytic activity">
    <reaction evidence="1">
        <text>(2R)-2-phosphoglycerate = (2R)-3-phosphoglycerate</text>
        <dbReference type="Rhea" id="RHEA:15901"/>
        <dbReference type="ChEBI" id="CHEBI:58272"/>
        <dbReference type="ChEBI" id="CHEBI:58289"/>
        <dbReference type="EC" id="5.4.2.11"/>
    </reaction>
</comment>
<comment type="pathway">
    <text evidence="1">Carbohydrate degradation; glycolysis; pyruvate from D-glyceraldehyde 3-phosphate: step 3/5.</text>
</comment>
<comment type="similarity">
    <text evidence="1">Belongs to the phosphoglycerate mutase family. BPG-dependent PGAM subfamily.</text>
</comment>
<keyword id="KW-0312">Gluconeogenesis</keyword>
<keyword id="KW-0324">Glycolysis</keyword>
<keyword id="KW-0413">Isomerase</keyword>
<keyword id="KW-1185">Reference proteome</keyword>
<gene>
    <name evidence="1" type="primary">gpmA2</name>
    <name type="ordered locus">gll1875</name>
</gene>
<sequence length="219" mass="24664">MALLVMVRHGQSIWNLENRFTGWTDVPLTEKGRAEARACGELIYCVPFAVAFTSKLTRAQDTLRLILEAADQPDVPVIEDQALNERHYGELQGLNKAETAAKYGEETVRQWRRSLEGRPPGGESLKDTALRSLRYFYEKIVPELEAGKNVLVSAHGNTIRAILMELDHLSPEQVEKVEIEYCVPVAFEHQADGTFSQVLMPRCDIIRPPQPPARSIARL</sequence>
<dbReference type="EC" id="5.4.2.11" evidence="1"/>
<dbReference type="EMBL" id="BA000045">
    <property type="protein sequence ID" value="BAC89816.1"/>
    <property type="molecule type" value="Genomic_DNA"/>
</dbReference>
<dbReference type="RefSeq" id="NP_924821.1">
    <property type="nucleotide sequence ID" value="NC_005125.1"/>
</dbReference>
<dbReference type="RefSeq" id="WP_011141873.1">
    <property type="nucleotide sequence ID" value="NC_005125.1"/>
</dbReference>
<dbReference type="SMR" id="Q7NJF7"/>
<dbReference type="FunCoup" id="Q7NJF7">
    <property type="interactions" value="257"/>
</dbReference>
<dbReference type="STRING" id="251221.gene:10759367"/>
<dbReference type="EnsemblBacteria" id="BAC89816">
    <property type="protein sequence ID" value="BAC89816"/>
    <property type="gene ID" value="BAC89816"/>
</dbReference>
<dbReference type="KEGG" id="gvi:gll1875"/>
<dbReference type="PATRIC" id="fig|251221.4.peg.1907"/>
<dbReference type="eggNOG" id="COG0588">
    <property type="taxonomic scope" value="Bacteria"/>
</dbReference>
<dbReference type="HOGENOM" id="CLU_033323_1_4_3"/>
<dbReference type="InParanoid" id="Q7NJF7"/>
<dbReference type="OrthoDB" id="9781415at2"/>
<dbReference type="PhylomeDB" id="Q7NJF7"/>
<dbReference type="UniPathway" id="UPA00109">
    <property type="reaction ID" value="UER00186"/>
</dbReference>
<dbReference type="Proteomes" id="UP000000557">
    <property type="component" value="Chromosome"/>
</dbReference>
<dbReference type="GO" id="GO:0004619">
    <property type="term" value="F:phosphoglycerate mutase activity"/>
    <property type="evidence" value="ECO:0007669"/>
    <property type="project" value="UniProtKB-EC"/>
</dbReference>
<dbReference type="GO" id="GO:0006094">
    <property type="term" value="P:gluconeogenesis"/>
    <property type="evidence" value="ECO:0007669"/>
    <property type="project" value="UniProtKB-UniRule"/>
</dbReference>
<dbReference type="GO" id="GO:0006096">
    <property type="term" value="P:glycolytic process"/>
    <property type="evidence" value="ECO:0007669"/>
    <property type="project" value="UniProtKB-UniRule"/>
</dbReference>
<dbReference type="CDD" id="cd07067">
    <property type="entry name" value="HP_PGM_like"/>
    <property type="match status" value="1"/>
</dbReference>
<dbReference type="Gene3D" id="3.40.50.1240">
    <property type="entry name" value="Phosphoglycerate mutase-like"/>
    <property type="match status" value="1"/>
</dbReference>
<dbReference type="HAMAP" id="MF_01039">
    <property type="entry name" value="PGAM_GpmA"/>
    <property type="match status" value="1"/>
</dbReference>
<dbReference type="InterPro" id="IPR013078">
    <property type="entry name" value="His_Pase_superF_clade-1"/>
</dbReference>
<dbReference type="InterPro" id="IPR029033">
    <property type="entry name" value="His_PPase_superfam"/>
</dbReference>
<dbReference type="InterPro" id="IPR001345">
    <property type="entry name" value="PG/BPGM_mutase_AS"/>
</dbReference>
<dbReference type="InterPro" id="IPR005952">
    <property type="entry name" value="Phosphogly_mut1"/>
</dbReference>
<dbReference type="NCBIfam" id="TIGR01258">
    <property type="entry name" value="pgm_1"/>
    <property type="match status" value="1"/>
</dbReference>
<dbReference type="PANTHER" id="PTHR11931">
    <property type="entry name" value="PHOSPHOGLYCERATE MUTASE"/>
    <property type="match status" value="1"/>
</dbReference>
<dbReference type="Pfam" id="PF00300">
    <property type="entry name" value="His_Phos_1"/>
    <property type="match status" value="1"/>
</dbReference>
<dbReference type="SMART" id="SM00855">
    <property type="entry name" value="PGAM"/>
    <property type="match status" value="1"/>
</dbReference>
<dbReference type="SUPFAM" id="SSF53254">
    <property type="entry name" value="Phosphoglycerate mutase-like"/>
    <property type="match status" value="1"/>
</dbReference>
<dbReference type="PROSITE" id="PS00175">
    <property type="entry name" value="PG_MUTASE"/>
    <property type="match status" value="1"/>
</dbReference>
<protein>
    <recommendedName>
        <fullName evidence="1">2,3-bisphosphoglycerate-dependent phosphoglycerate mutase 2</fullName>
        <shortName evidence="1">BPG-dependent PGAM 2</shortName>
        <shortName evidence="1">PGAM 2</shortName>
        <shortName evidence="1">Phosphoglyceromutase 2</shortName>
        <shortName evidence="1">dPGM 2</shortName>
        <ecNumber evidence="1">5.4.2.11</ecNumber>
    </recommendedName>
</protein>
<reference key="1">
    <citation type="journal article" date="2003" name="DNA Res.">
        <title>Complete genome structure of Gloeobacter violaceus PCC 7421, a cyanobacterium that lacks thylakoids.</title>
        <authorList>
            <person name="Nakamura Y."/>
            <person name="Kaneko T."/>
            <person name="Sato S."/>
            <person name="Mimuro M."/>
            <person name="Miyashita H."/>
            <person name="Tsuchiya T."/>
            <person name="Sasamoto S."/>
            <person name="Watanabe A."/>
            <person name="Kawashima K."/>
            <person name="Kishida Y."/>
            <person name="Kiyokawa C."/>
            <person name="Kohara M."/>
            <person name="Matsumoto M."/>
            <person name="Matsuno A."/>
            <person name="Nakazaki N."/>
            <person name="Shimpo S."/>
            <person name="Takeuchi C."/>
            <person name="Yamada M."/>
            <person name="Tabata S."/>
        </authorList>
    </citation>
    <scope>NUCLEOTIDE SEQUENCE [LARGE SCALE GENOMIC DNA]</scope>
    <source>
        <strain>ATCC 29082 / PCC 7421</strain>
    </source>
</reference>
<proteinExistence type="inferred from homology"/>
<accession>Q7NJF7</accession>
<organism>
    <name type="scientific">Gloeobacter violaceus (strain ATCC 29082 / PCC 7421)</name>
    <dbReference type="NCBI Taxonomy" id="251221"/>
    <lineage>
        <taxon>Bacteria</taxon>
        <taxon>Bacillati</taxon>
        <taxon>Cyanobacteriota</taxon>
        <taxon>Cyanophyceae</taxon>
        <taxon>Gloeobacterales</taxon>
        <taxon>Gloeobacteraceae</taxon>
        <taxon>Gloeobacter</taxon>
    </lineage>
</organism>